<protein>
    <recommendedName>
        <fullName evidence="1">Glycogen synthase</fullName>
        <ecNumber evidence="1">2.4.1.21</ecNumber>
    </recommendedName>
    <alternativeName>
        <fullName evidence="1">Starch [bacterial glycogen] synthase</fullName>
    </alternativeName>
</protein>
<dbReference type="EC" id="2.4.1.21" evidence="1"/>
<dbReference type="EMBL" id="U30252">
    <property type="protein sequence ID" value="AAL03921.2"/>
    <property type="molecule type" value="Genomic_DNA"/>
</dbReference>
<dbReference type="EMBL" id="CP000100">
    <property type="protein sequence ID" value="ABB58548.1"/>
    <property type="molecule type" value="Genomic_DNA"/>
</dbReference>
<dbReference type="RefSeq" id="WP_011378498.1">
    <property type="nucleotide sequence ID" value="NZ_JACJTX010000001.1"/>
</dbReference>
<dbReference type="SMR" id="Q935Y7"/>
<dbReference type="STRING" id="1140.Synpcc7942_2518"/>
<dbReference type="CAZy" id="GT5">
    <property type="family name" value="Glycosyltransferase Family 5"/>
</dbReference>
<dbReference type="PaxDb" id="1140-Synpcc7942_2518"/>
<dbReference type="GeneID" id="72431409"/>
<dbReference type="KEGG" id="syf:Synpcc7942_2518"/>
<dbReference type="eggNOG" id="COG0297">
    <property type="taxonomic scope" value="Bacteria"/>
</dbReference>
<dbReference type="HOGENOM" id="CLU_009583_18_2_3"/>
<dbReference type="OrthoDB" id="9808590at2"/>
<dbReference type="BioCyc" id="SYNEL:SYNPCC7942_2518-MONOMER"/>
<dbReference type="UniPathway" id="UPA00164"/>
<dbReference type="Proteomes" id="UP000889800">
    <property type="component" value="Chromosome"/>
</dbReference>
<dbReference type="GO" id="GO:0009011">
    <property type="term" value="F:alpha-1,4-glucan glucosyltransferase (ADP-glucose donor) activity"/>
    <property type="evidence" value="ECO:0007669"/>
    <property type="project" value="UniProtKB-UniRule"/>
</dbReference>
<dbReference type="GO" id="GO:0004373">
    <property type="term" value="F:alpha-1,4-glucan glucosyltransferase (UDP-glucose donor) activity"/>
    <property type="evidence" value="ECO:0007669"/>
    <property type="project" value="InterPro"/>
</dbReference>
<dbReference type="GO" id="GO:0005978">
    <property type="term" value="P:glycogen biosynthetic process"/>
    <property type="evidence" value="ECO:0007669"/>
    <property type="project" value="UniProtKB-UniRule"/>
</dbReference>
<dbReference type="CDD" id="cd03791">
    <property type="entry name" value="GT5_Glycogen_synthase_DULL1-like"/>
    <property type="match status" value="1"/>
</dbReference>
<dbReference type="Gene3D" id="3.40.50.2000">
    <property type="entry name" value="Glycogen Phosphorylase B"/>
    <property type="match status" value="2"/>
</dbReference>
<dbReference type="HAMAP" id="MF_00484">
    <property type="entry name" value="Glycogen_synth"/>
    <property type="match status" value="1"/>
</dbReference>
<dbReference type="InterPro" id="IPR001296">
    <property type="entry name" value="Glyco_trans_1"/>
</dbReference>
<dbReference type="InterPro" id="IPR011835">
    <property type="entry name" value="GS/SS"/>
</dbReference>
<dbReference type="InterPro" id="IPR013534">
    <property type="entry name" value="Starch_synth_cat_dom"/>
</dbReference>
<dbReference type="NCBIfam" id="TIGR02095">
    <property type="entry name" value="glgA"/>
    <property type="match status" value="1"/>
</dbReference>
<dbReference type="NCBIfam" id="NF001900">
    <property type="entry name" value="PRK00654.1-3"/>
    <property type="match status" value="1"/>
</dbReference>
<dbReference type="PANTHER" id="PTHR45825:SF11">
    <property type="entry name" value="ALPHA AMYLASE DOMAIN-CONTAINING PROTEIN"/>
    <property type="match status" value="1"/>
</dbReference>
<dbReference type="PANTHER" id="PTHR45825">
    <property type="entry name" value="GRANULE-BOUND STARCH SYNTHASE 1, CHLOROPLASTIC/AMYLOPLASTIC"/>
    <property type="match status" value="1"/>
</dbReference>
<dbReference type="Pfam" id="PF08323">
    <property type="entry name" value="Glyco_transf_5"/>
    <property type="match status" value="1"/>
</dbReference>
<dbReference type="Pfam" id="PF00534">
    <property type="entry name" value="Glycos_transf_1"/>
    <property type="match status" value="1"/>
</dbReference>
<dbReference type="SUPFAM" id="SSF53756">
    <property type="entry name" value="UDP-Glycosyltransferase/glycogen phosphorylase"/>
    <property type="match status" value="1"/>
</dbReference>
<organism>
    <name type="scientific">Synechococcus elongatus (strain ATCC 33912 / PCC 7942 / FACHB-805)</name>
    <name type="common">Anacystis nidulans R2</name>
    <dbReference type="NCBI Taxonomy" id="1140"/>
    <lineage>
        <taxon>Bacteria</taxon>
        <taxon>Bacillati</taxon>
        <taxon>Cyanobacteriota</taxon>
        <taxon>Cyanophyceae</taxon>
        <taxon>Synechococcales</taxon>
        <taxon>Synechococcaceae</taxon>
        <taxon>Synechococcus</taxon>
    </lineage>
</organism>
<gene>
    <name evidence="1" type="primary">glgA</name>
    <name type="ordered locus">Synpcc7942_2518</name>
    <name type="ORF">sea0009</name>
</gene>
<comment type="function">
    <text evidence="1">Synthesizes alpha-1,4-glucan chains using ADP-glucose.</text>
</comment>
<comment type="catalytic activity">
    <reaction evidence="1">
        <text>[(1-&gt;4)-alpha-D-glucosyl](n) + ADP-alpha-D-glucose = [(1-&gt;4)-alpha-D-glucosyl](n+1) + ADP + H(+)</text>
        <dbReference type="Rhea" id="RHEA:18189"/>
        <dbReference type="Rhea" id="RHEA-COMP:9584"/>
        <dbReference type="Rhea" id="RHEA-COMP:9587"/>
        <dbReference type="ChEBI" id="CHEBI:15378"/>
        <dbReference type="ChEBI" id="CHEBI:15444"/>
        <dbReference type="ChEBI" id="CHEBI:57498"/>
        <dbReference type="ChEBI" id="CHEBI:456216"/>
        <dbReference type="EC" id="2.4.1.21"/>
    </reaction>
</comment>
<comment type="pathway">
    <text evidence="1">Glycan biosynthesis; glycogen biosynthesis.</text>
</comment>
<comment type="similarity">
    <text evidence="1">Belongs to the glycosyltransferase 1 family. Bacterial/plant glycogen synthase subfamily.</text>
</comment>
<proteinExistence type="inferred from homology"/>
<keyword id="KW-0320">Glycogen biosynthesis</keyword>
<keyword id="KW-0328">Glycosyltransferase</keyword>
<keyword id="KW-1185">Reference proteome</keyword>
<keyword id="KW-0808">Transferase</keyword>
<accession>Q935Y7</accession>
<accession>Q31K71</accession>
<name>GLGA_SYNE7</name>
<reference key="1">
    <citation type="submission" date="2002-11" db="EMBL/GenBank/DDBJ databases">
        <title>Synechococcus elongatus PCC7942 genome sequence, cosmid 7H1.</title>
        <authorList>
            <person name="Holtman C.K."/>
            <person name="Socias T."/>
            <person name="Mohler B.J."/>
            <person name="Chen Y."/>
            <person name="Min H."/>
            <person name="Golden S.S."/>
            <person name="Youderian P."/>
        </authorList>
    </citation>
    <scope>NUCLEOTIDE SEQUENCE [GENOMIC DNA]</scope>
</reference>
<reference key="2">
    <citation type="submission" date="2005-08" db="EMBL/GenBank/DDBJ databases">
        <title>Complete sequence of chromosome 1 of Synechococcus elongatus PCC 7942.</title>
        <authorList>
            <consortium name="US DOE Joint Genome Institute"/>
            <person name="Copeland A."/>
            <person name="Lucas S."/>
            <person name="Lapidus A."/>
            <person name="Barry K."/>
            <person name="Detter J.C."/>
            <person name="Glavina T."/>
            <person name="Hammon N."/>
            <person name="Israni S."/>
            <person name="Pitluck S."/>
            <person name="Schmutz J."/>
            <person name="Larimer F."/>
            <person name="Land M."/>
            <person name="Kyrpides N."/>
            <person name="Lykidis A."/>
            <person name="Golden S."/>
            <person name="Richardson P."/>
        </authorList>
    </citation>
    <scope>NUCLEOTIDE SEQUENCE [LARGE SCALE GENOMIC DNA]</scope>
    <source>
        <strain>ATCC 33912 / PCC 7942 / FACHB-805</strain>
    </source>
</reference>
<evidence type="ECO:0000255" key="1">
    <source>
        <dbReference type="HAMAP-Rule" id="MF_00484"/>
    </source>
</evidence>
<evidence type="ECO:0000305" key="2"/>
<feature type="chain" id="PRO_0000188653" description="Glycogen synthase">
    <location>
        <begin position="1"/>
        <end position="465"/>
    </location>
</feature>
<feature type="binding site" evidence="1">
    <location>
        <position position="15"/>
    </location>
    <ligand>
        <name>ADP-alpha-D-glucose</name>
        <dbReference type="ChEBI" id="CHEBI:57498"/>
    </ligand>
</feature>
<feature type="sequence conflict" description="In Ref. 1; AAL03921." evidence="2" ref="1">
    <original>LG</original>
    <variation>SA</variation>
    <location>
        <begin position="33"/>
        <end position="34"/>
    </location>
</feature>
<feature type="sequence conflict" description="In Ref. 1; AAL03921." evidence="2" ref="1">
    <original>R</original>
    <variation>G</variation>
    <location>
        <position position="38"/>
    </location>
</feature>
<feature type="sequence conflict" description="In Ref. 1; AAL03921." evidence="2" ref="1">
    <original>P</original>
    <variation>R</variation>
    <location>
        <position position="42"/>
    </location>
</feature>
<feature type="sequence conflict" description="In Ref. 1; AAL03921." evidence="2" ref="1">
    <original>N</original>
    <variation>T</variation>
    <location>
        <position position="48"/>
    </location>
</feature>
<feature type="sequence conflict" description="In Ref. 1; AAL03921." evidence="2" ref="1">
    <original>DK</original>
    <variation>IA</variation>
    <location>
        <begin position="251"/>
        <end position="252"/>
    </location>
</feature>
<feature type="sequence conflict" description="In Ref. 1; AAL03921." evidence="2" ref="1">
    <original>K</original>
    <variation>R</variation>
    <location>
        <position position="257"/>
    </location>
</feature>
<sequence length="465" mass="53347">MRILFVAAECAPFAKVGGMGDVVGSLPKVLKALGHDVRIFMPYYGFLNSKLDIPAEPIWWGYAMFNHFAVYETQLPGSDVPLYLMGHPAFDPHRIYSGEDEDWRFTFFANGAAEFSWNYWKPQVIHCHDWHTGMIPVWMHQSPDISTVFTIHNLAYQGPWRWKLEKITWCPWYMQGDSTMAAALLYADRVNTVSPTYAQQIQTPTYGEKLEGLLSFISGKLSGILNGIDVDSYNPATDTRIVANYDRDTLDKRLNNKLALQKEMGLEVNPDRFLIGFVARLVEQKGIDLLLQILDRFLSYSDAQFVVLGTGERYYETQLWELATRYPGRMSTYLMYDEGLSRRIYAGSDAFLVPSRFEPCGITQMLALRYGSVPIVRRTGGLVDTVFHHDPRHAEGNGYCFDRYEPLDLYTCLVRAWESYQYQPQWQKLQQRGMAVDLSWKQSAIAYEQLYAEAIGLPIDVLQEA</sequence>